<organism>
    <name type="scientific">Pan troglodytes</name>
    <name type="common">Chimpanzee</name>
    <dbReference type="NCBI Taxonomy" id="9598"/>
    <lineage>
        <taxon>Eukaryota</taxon>
        <taxon>Metazoa</taxon>
        <taxon>Chordata</taxon>
        <taxon>Craniata</taxon>
        <taxon>Vertebrata</taxon>
        <taxon>Euteleostomi</taxon>
        <taxon>Mammalia</taxon>
        <taxon>Eutheria</taxon>
        <taxon>Euarchontoglires</taxon>
        <taxon>Primates</taxon>
        <taxon>Haplorrhini</taxon>
        <taxon>Catarrhini</taxon>
        <taxon>Hominidae</taxon>
        <taxon>Pan</taxon>
    </lineage>
</organism>
<evidence type="ECO:0000250" key="1"/>
<evidence type="ECO:0000250" key="2">
    <source>
        <dbReference type="UniProtKB" id="O14607"/>
    </source>
</evidence>
<evidence type="ECO:0000256" key="3">
    <source>
        <dbReference type="SAM" id="MobiDB-lite"/>
    </source>
</evidence>
<evidence type="ECO:0000305" key="4"/>
<proteinExistence type="evidence at transcript level"/>
<dbReference type="EC" id="1.14.11.68" evidence="2"/>
<dbReference type="EMBL" id="AY679781">
    <property type="protein sequence ID" value="AAT84369.1"/>
    <property type="molecule type" value="mRNA"/>
</dbReference>
<dbReference type="RefSeq" id="NP_001009002.1">
    <property type="nucleotide sequence ID" value="NM_001009002.1"/>
</dbReference>
<dbReference type="SMR" id="Q6B4Z3"/>
<dbReference type="STRING" id="9598.ENSPTRP00000089658"/>
<dbReference type="PaxDb" id="9598-ENSPTRP00000058594"/>
<dbReference type="GeneID" id="449579"/>
<dbReference type="KEGG" id="ptr:449579"/>
<dbReference type="CTD" id="7404"/>
<dbReference type="eggNOG" id="KOG1124">
    <property type="taxonomic scope" value="Eukaryota"/>
</dbReference>
<dbReference type="eggNOG" id="KOG1246">
    <property type="taxonomic scope" value="Eukaryota"/>
</dbReference>
<dbReference type="InParanoid" id="Q6B4Z3"/>
<dbReference type="Proteomes" id="UP000002277">
    <property type="component" value="Unplaced"/>
</dbReference>
<dbReference type="GO" id="GO:0044666">
    <property type="term" value="C:MLL3/4 complex"/>
    <property type="evidence" value="ECO:0000318"/>
    <property type="project" value="GO_Central"/>
</dbReference>
<dbReference type="GO" id="GO:0031490">
    <property type="term" value="F:chromatin DNA binding"/>
    <property type="evidence" value="ECO:0000318"/>
    <property type="project" value="GO_Central"/>
</dbReference>
<dbReference type="GO" id="GO:0071558">
    <property type="term" value="F:histone H3K27me2/H3K27me3 demethylase activity"/>
    <property type="evidence" value="ECO:0000318"/>
    <property type="project" value="GO_Central"/>
</dbReference>
<dbReference type="GO" id="GO:0046872">
    <property type="term" value="F:metal ion binding"/>
    <property type="evidence" value="ECO:0007669"/>
    <property type="project" value="UniProtKB-KW"/>
</dbReference>
<dbReference type="GO" id="GO:0000978">
    <property type="term" value="F:RNA polymerase II cis-regulatory region sequence-specific DNA binding"/>
    <property type="evidence" value="ECO:0000318"/>
    <property type="project" value="GO_Central"/>
</dbReference>
<dbReference type="GO" id="GO:0007507">
    <property type="term" value="P:heart development"/>
    <property type="evidence" value="ECO:0000318"/>
    <property type="project" value="GO_Central"/>
</dbReference>
<dbReference type="GO" id="GO:0010468">
    <property type="term" value="P:regulation of gene expression"/>
    <property type="evidence" value="ECO:0000318"/>
    <property type="project" value="GO_Central"/>
</dbReference>
<dbReference type="FunFam" id="1.25.40.10:FF:000022">
    <property type="entry name" value="lysine-specific demethylase 6A isoform X1"/>
    <property type="match status" value="1"/>
</dbReference>
<dbReference type="FunFam" id="1.25.40.10:FF:000011">
    <property type="entry name" value="lysine-specific demethylase 6A isoform X3"/>
    <property type="match status" value="1"/>
</dbReference>
<dbReference type="FunFam" id="1.20.58.1370:FF:000002">
    <property type="entry name" value="lysine-specific demethylase 6A isoform X6"/>
    <property type="match status" value="1"/>
</dbReference>
<dbReference type="FunFam" id="2.60.120.650:FF:000044">
    <property type="entry name" value="Ubiquitously transcribed tetratricopeptide repeat protein Y-linked transcript variant 21"/>
    <property type="match status" value="1"/>
</dbReference>
<dbReference type="Gene3D" id="1.20.58.1370">
    <property type="match status" value="1"/>
</dbReference>
<dbReference type="Gene3D" id="2.60.120.650">
    <property type="entry name" value="Cupin"/>
    <property type="match status" value="1"/>
</dbReference>
<dbReference type="Gene3D" id="1.25.40.10">
    <property type="entry name" value="Tetratricopeptide repeat domain"/>
    <property type="match status" value="2"/>
</dbReference>
<dbReference type="InterPro" id="IPR051630">
    <property type="entry name" value="Corepressor-Demethylase"/>
</dbReference>
<dbReference type="InterPro" id="IPR011990">
    <property type="entry name" value="TPR-like_helical_dom_sf"/>
</dbReference>
<dbReference type="InterPro" id="IPR019734">
    <property type="entry name" value="TPR_rpt"/>
</dbReference>
<dbReference type="PANTHER" id="PTHR14017:SF25">
    <property type="entry name" value="HISTONE DEMETHYLASE UTY"/>
    <property type="match status" value="1"/>
</dbReference>
<dbReference type="PANTHER" id="PTHR14017">
    <property type="entry name" value="LYSINE-SPECIFIC DEMETHYLASE"/>
    <property type="match status" value="1"/>
</dbReference>
<dbReference type="Pfam" id="PF13181">
    <property type="entry name" value="TPR_8"/>
    <property type="match status" value="2"/>
</dbReference>
<dbReference type="PRINTS" id="PR02045">
    <property type="entry name" value="F138DOMAIN"/>
</dbReference>
<dbReference type="SMART" id="SM00028">
    <property type="entry name" value="TPR"/>
    <property type="match status" value="7"/>
</dbReference>
<dbReference type="SUPFAM" id="SSF48452">
    <property type="entry name" value="TPR-like"/>
    <property type="match status" value="2"/>
</dbReference>
<dbReference type="PROSITE" id="PS50005">
    <property type="entry name" value="TPR"/>
    <property type="match status" value="7"/>
</dbReference>
<dbReference type="PROSITE" id="PS50293">
    <property type="entry name" value="TPR_REGION"/>
    <property type="match status" value="1"/>
</dbReference>
<comment type="function">
    <text evidence="2">Male-specific histone demethylase that catalyzes trimethylated 'Lys-27' (H3K27me3) demethylation in histone H3. Has relatively low lysine demethylase activity.</text>
</comment>
<comment type="catalytic activity">
    <reaction evidence="2">
        <text>N(6),N(6),N(6)-trimethyl-L-lysyl(27)-[histone H3] + 2 2-oxoglutarate + 2 O2 = N(6)-methyl-L-lysyl(27)-[histone H3] + 2 formaldehyde + 2 succinate + 2 CO2</text>
        <dbReference type="Rhea" id="RHEA:60224"/>
        <dbReference type="Rhea" id="RHEA-COMP:15535"/>
        <dbReference type="Rhea" id="RHEA-COMP:15544"/>
        <dbReference type="ChEBI" id="CHEBI:15379"/>
        <dbReference type="ChEBI" id="CHEBI:16526"/>
        <dbReference type="ChEBI" id="CHEBI:16810"/>
        <dbReference type="ChEBI" id="CHEBI:16842"/>
        <dbReference type="ChEBI" id="CHEBI:30031"/>
        <dbReference type="ChEBI" id="CHEBI:61929"/>
        <dbReference type="ChEBI" id="CHEBI:61961"/>
        <dbReference type="EC" id="1.14.11.68"/>
    </reaction>
</comment>
<comment type="cofactor">
    <cofactor evidence="1">
        <name>L-ascorbate</name>
        <dbReference type="ChEBI" id="CHEBI:38290"/>
    </cofactor>
</comment>
<comment type="cofactor">
    <cofactor evidence="1">
        <name>Fe(2+)</name>
        <dbReference type="ChEBI" id="CHEBI:29033"/>
    </cofactor>
</comment>
<comment type="subunit">
    <text evidence="1">Interacts with TLE1 and TLE2.</text>
</comment>
<comment type="subcellular location">
    <subcellularLocation>
        <location evidence="4">Nucleus</location>
    </subcellularLocation>
</comment>
<comment type="similarity">
    <text evidence="4">Belongs to the UTX family.</text>
</comment>
<accession>Q6B4Z3</accession>
<feature type="chain" id="PRO_0000106412" description="Histone demethylase UTY">
    <location>
        <begin position="1"/>
        <end position="1079"/>
    </location>
</feature>
<feature type="repeat" description="TPR 1">
    <location>
        <begin position="90"/>
        <end position="123"/>
    </location>
</feature>
<feature type="repeat" description="TPR 2">
    <location>
        <begin position="127"/>
        <end position="160"/>
    </location>
</feature>
<feature type="repeat" description="TPR 3">
    <location>
        <begin position="164"/>
        <end position="198"/>
    </location>
</feature>
<feature type="repeat" description="TPR 4">
    <location>
        <begin position="202"/>
        <end position="235"/>
    </location>
</feature>
<feature type="repeat" description="TPR 5">
    <location>
        <begin position="240"/>
        <end position="280"/>
    </location>
</feature>
<feature type="repeat" description="TPR 6">
    <location>
        <begin position="281"/>
        <end position="314"/>
    </location>
</feature>
<feature type="repeat" description="TPR 7">
    <location>
        <begin position="316"/>
        <end position="348"/>
    </location>
</feature>
<feature type="repeat" description="TPR 8">
    <location>
        <begin position="349"/>
        <end position="382"/>
    </location>
</feature>
<feature type="region of interest" description="Disordered" evidence="3">
    <location>
        <begin position="558"/>
        <end position="694"/>
    </location>
</feature>
<feature type="region of interest" description="Disordered" evidence="3">
    <location>
        <begin position="757"/>
        <end position="813"/>
    </location>
</feature>
<feature type="compositionally biased region" description="Polar residues" evidence="3">
    <location>
        <begin position="558"/>
        <end position="601"/>
    </location>
</feature>
<feature type="compositionally biased region" description="Polar residues" evidence="3">
    <location>
        <begin position="609"/>
        <end position="626"/>
    </location>
</feature>
<feature type="compositionally biased region" description="Polar residues" evidence="3">
    <location>
        <begin position="647"/>
        <end position="656"/>
    </location>
</feature>
<feature type="compositionally biased region" description="Low complexity" evidence="3">
    <location>
        <begin position="761"/>
        <end position="779"/>
    </location>
</feature>
<feature type="compositionally biased region" description="Polar residues" evidence="3">
    <location>
        <begin position="782"/>
        <end position="795"/>
    </location>
</feature>
<feature type="modified residue" description="Phosphothreonine" evidence="2">
    <location>
        <position position="887"/>
    </location>
</feature>
<protein>
    <recommendedName>
        <fullName>Histone demethylase UTY</fullName>
        <ecNumber evidence="2">1.14.11.68</ecNumber>
    </recommendedName>
    <alternativeName>
        <fullName>Ubiquitously transcribed TPR protein on the Y chromosome</fullName>
    </alternativeName>
    <alternativeName>
        <fullName>Ubiquitously transcribed Y chromosome tetratricopeptide repeat protein</fullName>
    </alternativeName>
    <alternativeName>
        <fullName evidence="4">[histone H3]-trimethyl-L-lysine(27) demethylase UTY</fullName>
    </alternativeName>
</protein>
<name>UTY_PANTR</name>
<reference key="1">
    <citation type="submission" date="2004-07" db="EMBL/GenBank/DDBJ databases">
        <title>The DNA sequence of the chimpanzee Y chromosome.</title>
        <authorList>
            <person name="Hughes J.F."/>
            <person name="Pyntikova T."/>
            <person name="Skaletsky H."/>
            <person name="Minx P.J."/>
            <person name="Rozen S."/>
            <person name="Wilson R.K."/>
            <person name="Page D.C."/>
        </authorList>
    </citation>
    <scope>NUCLEOTIDE SEQUENCE [MRNA]</scope>
</reference>
<keyword id="KW-0156">Chromatin regulator</keyword>
<keyword id="KW-0223">Dioxygenase</keyword>
<keyword id="KW-0408">Iron</keyword>
<keyword id="KW-0479">Metal-binding</keyword>
<keyword id="KW-0539">Nucleus</keyword>
<keyword id="KW-0560">Oxidoreductase</keyword>
<keyword id="KW-0597">Phosphoprotein</keyword>
<keyword id="KW-1185">Reference proteome</keyword>
<keyword id="KW-0677">Repeat</keyword>
<keyword id="KW-0802">TPR repeat</keyword>
<sequence length="1079" mass="118032">MKSCGVSLTTAAVAFGDEAKKMAAGKASREGEEEPLSLTVEEREALGDMDSRLFGFVRLHEDGARTKTLLGKAVRCYESLILKAEGKVESDFFCQLGHFNLLLEDYSKALSAYQRYYSLQADYWKNAAFLYGLGLVYFYYNAFHWAIKAFQDVLYVDPSFCRAKEIHLRLGLMFKVNTDYKSSLKHFQLALIDCNPCTLSSAEIQFHIAHLYETQRKYHSAKEAYEQLLQTENLPAQVKATVLQQLGWMHHNMDLVGDKATKESYAIPYLQKSLEADPNSGQSWYFLGRCYSSIGKVQDAFVSYRQSIDRSEASADTWCSIGVLYQQQNQPIDALQAYICAVQLDHGHAAAWMDLGTLYESCNQPQDAIKCYLNAARSKRCSNTSTLAARIKFLQNGSDNWNGGQSLSHHPVQQVYSLCLTPQKLQHLEQLRANRDNLNPAQKHQLEQLESQFVLMQQMRHKEVAQVRTTGIHNGAIADSSLPTNSVSNRQPHAALTRVSSVSQPGVRPACVEKLLSNGAFSAGCIPCGTSKILGSTDTILLGSNCIAGSESNGNVPYLQQNTHTLPHSHTDLNSSTEEPWRKQLSNSTQGLHKSQSSCLSGPNEEQPLFSTGSAQYHQATSTGIKKSNEHLTLPSNSVPQGDADSHLSSHTATSGGQQGIMFTKESKPSKNRSLVPETSRHTGDPSNGCADVKGLSNHVHQLIADAVSSPNHGDSPNLLIADNPQLSALLIGKANGNVGTGTCDKVNNIHPAVHTKTDHSVASSPSSAISTATPSPKSTEQRSINSVTSLNSPHSGLHTVNGEGLGNSQSSTKVDLPLVSHRSTSQIIPSMSVSICPSSTEVLKACRNPGKNGLSNSCILLDKCPPPRPPTSPYPPLPKDKLNPPTPSIYLENKRDAFFPPLHQFCTNPKNPVTVIRGLAGALKLDLGLFSTKTLVEANNEHIVEVRTQLLQPADENWDPTGTKKIWRCESNRSHTTIAKYAQYQASSFQESLRAGMQWCDLSSLQPPPPGFKRFSHLSLPNSWNYRHLPSCPTNFCIFVETGFHHVGQAHLELLTSGGLLASASQSAGITGVSHHAR</sequence>
<gene>
    <name type="primary">UTY</name>
    <name type="synonym">KDM6C</name>
</gene>